<name>TPL_PASMU</name>
<gene>
    <name type="primary">tpl</name>
    <name type="ordered locus">PM0811</name>
</gene>
<reference key="1">
    <citation type="journal article" date="2001" name="Proc. Natl. Acad. Sci. U.S.A.">
        <title>Complete genomic sequence of Pasteurella multocida Pm70.</title>
        <authorList>
            <person name="May B.J."/>
            <person name="Zhang Q."/>
            <person name="Li L.L."/>
            <person name="Paustian M.L."/>
            <person name="Whittam T.S."/>
            <person name="Kapur V."/>
        </authorList>
    </citation>
    <scope>NUCLEOTIDE SEQUENCE [LARGE SCALE GENOMIC DNA]</scope>
    <source>
        <strain>Pm70</strain>
    </source>
</reference>
<accession>Q9CMK9</accession>
<proteinExistence type="inferred from homology"/>
<protein>
    <recommendedName>
        <fullName>Tyrosine phenol-lyase</fullName>
        <ecNumber>4.1.99.2</ecNumber>
    </recommendedName>
    <alternativeName>
        <fullName>Beta-tyrosinase</fullName>
    </alternativeName>
</protein>
<evidence type="ECO:0000250" key="1"/>
<evidence type="ECO:0000305" key="2"/>
<comment type="catalytic activity">
    <reaction>
        <text>L-tyrosine + H2O = phenol + pyruvate + NH4(+)</text>
        <dbReference type="Rhea" id="RHEA:21704"/>
        <dbReference type="ChEBI" id="CHEBI:15361"/>
        <dbReference type="ChEBI" id="CHEBI:15377"/>
        <dbReference type="ChEBI" id="CHEBI:15882"/>
        <dbReference type="ChEBI" id="CHEBI:28938"/>
        <dbReference type="ChEBI" id="CHEBI:58315"/>
        <dbReference type="EC" id="4.1.99.2"/>
    </reaction>
</comment>
<comment type="cofactor">
    <cofactor evidence="1">
        <name>pyridoxal 5'-phosphate</name>
        <dbReference type="ChEBI" id="CHEBI:597326"/>
    </cofactor>
</comment>
<comment type="subunit">
    <text evidence="1">Homotetramer.</text>
</comment>
<comment type="similarity">
    <text evidence="2">Belongs to the beta-eliminating lyase family.</text>
</comment>
<organism>
    <name type="scientific">Pasteurella multocida (strain Pm70)</name>
    <dbReference type="NCBI Taxonomy" id="272843"/>
    <lineage>
        <taxon>Bacteria</taxon>
        <taxon>Pseudomonadati</taxon>
        <taxon>Pseudomonadota</taxon>
        <taxon>Gammaproteobacteria</taxon>
        <taxon>Pasteurellales</taxon>
        <taxon>Pasteurellaceae</taxon>
        <taxon>Pasteurella</taxon>
    </lineage>
</organism>
<sequence>MRNYPAEPYKVKAVEPIAMTTREQREAYMKKAGYNTFLLNSEEVYIDLLTDSGTSAMSDKQWAGLMIGDEAYAGSRNFMHLQDVVREYYGFKYVVPTHQGRGAENLLSTIMIKPGDYVPGNMYFTTTRAHQERNGATFVDIIIDEAHDSQIDLPFKGNVDVKKLQKLIDEVGADKIPYICLAVTVNLAGGQPVSMANMREVKALCSKHGIKVMFDATRCVENAYFIKEREAEYKDATIKDILKEMMSYADGCTMSGKKDCLVNIGGFLCINDDDLYQQACELVVLFEGMPSYGGLAGRDMEAMAIGITESVDFHYIQHRVAQCYYLADKLEAAGVPIVKPVGGHAVFLDAKKFLPHIPQEQFPAQMLAAQIYIEGGVRSMERGIVSAGRDKKTGANHTPKLELVRLTIPRRVYTYAHLDHVADTIIKLFKHRDDIKGLDMVYEPKLLRFFTARFEPKA</sequence>
<dbReference type="EC" id="4.1.99.2"/>
<dbReference type="EMBL" id="AE004439">
    <property type="protein sequence ID" value="AAK02895.1"/>
    <property type="molecule type" value="Genomic_DNA"/>
</dbReference>
<dbReference type="RefSeq" id="WP_005722479.1">
    <property type="nucleotide sequence ID" value="NC_002663.1"/>
</dbReference>
<dbReference type="SMR" id="Q9CMK9"/>
<dbReference type="STRING" id="272843.PM0811"/>
<dbReference type="EnsemblBacteria" id="AAK02895">
    <property type="protein sequence ID" value="AAK02895"/>
    <property type="gene ID" value="PM0811"/>
</dbReference>
<dbReference type="KEGG" id="pmu:PM0811"/>
<dbReference type="HOGENOM" id="CLU_047223_0_0_6"/>
<dbReference type="OrthoDB" id="9764079at2"/>
<dbReference type="Proteomes" id="UP000000809">
    <property type="component" value="Chromosome"/>
</dbReference>
<dbReference type="GO" id="GO:0050371">
    <property type="term" value="F:tyrosine phenol-lyase activity"/>
    <property type="evidence" value="ECO:0007669"/>
    <property type="project" value="UniProtKB-UniRule"/>
</dbReference>
<dbReference type="GO" id="GO:0006570">
    <property type="term" value="P:tyrosine metabolic process"/>
    <property type="evidence" value="ECO:0007669"/>
    <property type="project" value="InterPro"/>
</dbReference>
<dbReference type="CDD" id="cd00617">
    <property type="entry name" value="Tnase_like"/>
    <property type="match status" value="1"/>
</dbReference>
<dbReference type="Gene3D" id="3.90.1150.10">
    <property type="entry name" value="Aspartate Aminotransferase, domain 1"/>
    <property type="match status" value="1"/>
</dbReference>
<dbReference type="Gene3D" id="3.40.640.10">
    <property type="entry name" value="Type I PLP-dependent aspartate aminotransferase-like (Major domain)"/>
    <property type="match status" value="1"/>
</dbReference>
<dbReference type="HAMAP" id="MF_00543">
    <property type="entry name" value="Tyr_phenol_lyase"/>
    <property type="match status" value="1"/>
</dbReference>
<dbReference type="InterPro" id="IPR001597">
    <property type="entry name" value="ArAA_b-elim_lyase/Thr_aldolase"/>
</dbReference>
<dbReference type="InterPro" id="IPR011166">
    <property type="entry name" value="Beta-eliminating_lyase"/>
</dbReference>
<dbReference type="InterPro" id="IPR015424">
    <property type="entry name" value="PyrdxlP-dep_Trfase"/>
</dbReference>
<dbReference type="InterPro" id="IPR015421">
    <property type="entry name" value="PyrdxlP-dep_Trfase_major"/>
</dbReference>
<dbReference type="InterPro" id="IPR015422">
    <property type="entry name" value="PyrdxlP-dep_Trfase_small"/>
</dbReference>
<dbReference type="InterPro" id="IPR018176">
    <property type="entry name" value="Tryptophanase_CS"/>
</dbReference>
<dbReference type="InterPro" id="IPR013441">
    <property type="entry name" value="Tyr_phenol_ly"/>
</dbReference>
<dbReference type="NCBIfam" id="NF009709">
    <property type="entry name" value="PRK13238.1"/>
    <property type="match status" value="1"/>
</dbReference>
<dbReference type="NCBIfam" id="TIGR02618">
    <property type="entry name" value="tyr_phenol_ly"/>
    <property type="match status" value="1"/>
</dbReference>
<dbReference type="PANTHER" id="PTHR32325">
    <property type="entry name" value="BETA-ELIMINATING LYASE-LIKE PROTEIN-RELATED"/>
    <property type="match status" value="1"/>
</dbReference>
<dbReference type="PANTHER" id="PTHR32325:SF4">
    <property type="entry name" value="TRYPTOPHANASE"/>
    <property type="match status" value="1"/>
</dbReference>
<dbReference type="Pfam" id="PF01212">
    <property type="entry name" value="Beta_elim_lyase"/>
    <property type="match status" value="1"/>
</dbReference>
<dbReference type="PIRSF" id="PIRSF001386">
    <property type="entry name" value="Trpase"/>
    <property type="match status" value="1"/>
</dbReference>
<dbReference type="SUPFAM" id="SSF53383">
    <property type="entry name" value="PLP-dependent transferases"/>
    <property type="match status" value="1"/>
</dbReference>
<dbReference type="PROSITE" id="PS00853">
    <property type="entry name" value="BETA_ELIM_LYASE"/>
    <property type="match status" value="1"/>
</dbReference>
<keyword id="KW-0456">Lyase</keyword>
<keyword id="KW-0663">Pyridoxal phosphate</keyword>
<keyword id="KW-1185">Reference proteome</keyword>
<feature type="chain" id="PRO_0000195636" description="Tyrosine phenol-lyase">
    <location>
        <begin position="1"/>
        <end position="458"/>
    </location>
</feature>
<feature type="modified residue" description="N6-(pyridoxal phosphate)lysine" evidence="1">
    <location>
        <position position="258"/>
    </location>
</feature>